<sequence length="290" mass="31645">MKLSLLASVALVPFVSAHYFFDVLVIDGKETRSNEFVRSNTRPAKYNPTKWKNIRDDMTPDMPDFRCNKGAFTFAGQTGTAEVKAGSKLAMKLAVGATMQHPGPALVYMSKAPSSAKTYEGDGDWFKIHEEGVCNKNADFTKDAWCTWDKDRIEFTIPADLPDGEYLIRPEHIGLHGAHDGQAEFYYTCAQVKVVGGGTGTPGPTIKFPGGYKKDDPSFNFSLWNGYKDYPMPGPTVWTGGSGSGSSSYSKVANVTSSDESSQSGASSSQGTVSTCPNKYNRRHARQFKP</sequence>
<evidence type="ECO:0000250" key="1">
    <source>
        <dbReference type="UniProtKB" id="G3XAP7"/>
    </source>
</evidence>
<evidence type="ECO:0000250" key="2">
    <source>
        <dbReference type="UniProtKB" id="Q1K8B6"/>
    </source>
</evidence>
<evidence type="ECO:0000250" key="3">
    <source>
        <dbReference type="UniProtKB" id="Q4WP32"/>
    </source>
</evidence>
<evidence type="ECO:0000255" key="4"/>
<evidence type="ECO:0000255" key="5">
    <source>
        <dbReference type="PROSITE-ProRule" id="PRU00498"/>
    </source>
</evidence>
<evidence type="ECO:0000256" key="6">
    <source>
        <dbReference type="SAM" id="MobiDB-lite"/>
    </source>
</evidence>
<evidence type="ECO:0000269" key="7">
    <source>
    </source>
</evidence>
<evidence type="ECO:0000303" key="8">
    <source>
    </source>
</evidence>
<evidence type="ECO:0000305" key="9"/>
<evidence type="ECO:0000305" key="10">
    <source>
    </source>
</evidence>
<dbReference type="EC" id="1.14.99.56" evidence="7"/>
<dbReference type="EMBL" id="AAHF01000001">
    <property type="protein sequence ID" value="EAL93749.1"/>
    <property type="molecule type" value="Genomic_DNA"/>
</dbReference>
<dbReference type="RefSeq" id="XP_755787.1">
    <property type="nucleotide sequence ID" value="XM_750694.1"/>
</dbReference>
<dbReference type="SMR" id="Q4X066"/>
<dbReference type="STRING" id="330879.Q4X066"/>
<dbReference type="EnsemblFungi" id="EAL93749">
    <property type="protein sequence ID" value="EAL93749"/>
    <property type="gene ID" value="AFUA_2G14540"/>
</dbReference>
<dbReference type="GeneID" id="3513161"/>
<dbReference type="KEGG" id="afm:AFUA_2G14540"/>
<dbReference type="VEuPathDB" id="FungiDB:Afu2g14540"/>
<dbReference type="eggNOG" id="ENOG502SING">
    <property type="taxonomic scope" value="Eukaryota"/>
</dbReference>
<dbReference type="HOGENOM" id="CLU_031730_4_0_1"/>
<dbReference type="InParanoid" id="Q4X066"/>
<dbReference type="OMA" id="TCAQVKV"/>
<dbReference type="OrthoDB" id="3496539at2759"/>
<dbReference type="Proteomes" id="UP000002530">
    <property type="component" value="Chromosome 2"/>
</dbReference>
<dbReference type="GO" id="GO:0005576">
    <property type="term" value="C:extracellular region"/>
    <property type="evidence" value="ECO:0007669"/>
    <property type="project" value="UniProtKB-SubCell"/>
</dbReference>
<dbReference type="GO" id="GO:0046872">
    <property type="term" value="F:metal ion binding"/>
    <property type="evidence" value="ECO:0007669"/>
    <property type="project" value="UniProtKB-KW"/>
</dbReference>
<dbReference type="GO" id="GO:0004497">
    <property type="term" value="F:monooxygenase activity"/>
    <property type="evidence" value="ECO:0007669"/>
    <property type="project" value="UniProtKB-KW"/>
</dbReference>
<dbReference type="GO" id="GO:0030245">
    <property type="term" value="P:cellulose catabolic process"/>
    <property type="evidence" value="ECO:0007669"/>
    <property type="project" value="UniProtKB-KW"/>
</dbReference>
<dbReference type="CDD" id="cd21175">
    <property type="entry name" value="LPMO_AA9"/>
    <property type="match status" value="1"/>
</dbReference>
<dbReference type="Gene3D" id="2.70.50.70">
    <property type="match status" value="1"/>
</dbReference>
<dbReference type="InterPro" id="IPR049892">
    <property type="entry name" value="AA9"/>
</dbReference>
<dbReference type="InterPro" id="IPR005103">
    <property type="entry name" value="AA9_LPMO"/>
</dbReference>
<dbReference type="PANTHER" id="PTHR33353:SF2">
    <property type="entry name" value="ENDO-BETA-1,4-GLUCANASE D"/>
    <property type="match status" value="1"/>
</dbReference>
<dbReference type="PANTHER" id="PTHR33353">
    <property type="entry name" value="PUTATIVE (AFU_ORTHOLOGUE AFUA_1G12560)-RELATED"/>
    <property type="match status" value="1"/>
</dbReference>
<dbReference type="Pfam" id="PF03443">
    <property type="entry name" value="AA9"/>
    <property type="match status" value="1"/>
</dbReference>
<gene>
    <name evidence="8" type="primary">AA9A</name>
    <name type="ORF">AFUA_2G14540</name>
</gene>
<reference key="1">
    <citation type="journal article" date="2005" name="Nature">
        <title>Genomic sequence of the pathogenic and allergenic filamentous fungus Aspergillus fumigatus.</title>
        <authorList>
            <person name="Nierman W.C."/>
            <person name="Pain A."/>
            <person name="Anderson M.J."/>
            <person name="Wortman J.R."/>
            <person name="Kim H.S."/>
            <person name="Arroyo J."/>
            <person name="Berriman M."/>
            <person name="Abe K."/>
            <person name="Archer D.B."/>
            <person name="Bermejo C."/>
            <person name="Bennett J.W."/>
            <person name="Bowyer P."/>
            <person name="Chen D."/>
            <person name="Collins M."/>
            <person name="Coulsen R."/>
            <person name="Davies R."/>
            <person name="Dyer P.S."/>
            <person name="Farman M.L."/>
            <person name="Fedorova N."/>
            <person name="Fedorova N.D."/>
            <person name="Feldblyum T.V."/>
            <person name="Fischer R."/>
            <person name="Fosker N."/>
            <person name="Fraser A."/>
            <person name="Garcia J.L."/>
            <person name="Garcia M.J."/>
            <person name="Goble A."/>
            <person name="Goldman G.H."/>
            <person name="Gomi K."/>
            <person name="Griffith-Jones S."/>
            <person name="Gwilliam R."/>
            <person name="Haas B.J."/>
            <person name="Haas H."/>
            <person name="Harris D.E."/>
            <person name="Horiuchi H."/>
            <person name="Huang J."/>
            <person name="Humphray S."/>
            <person name="Jimenez J."/>
            <person name="Keller N."/>
            <person name="Khouri H."/>
            <person name="Kitamoto K."/>
            <person name="Kobayashi T."/>
            <person name="Konzack S."/>
            <person name="Kulkarni R."/>
            <person name="Kumagai T."/>
            <person name="Lafton A."/>
            <person name="Latge J.-P."/>
            <person name="Li W."/>
            <person name="Lord A."/>
            <person name="Lu C."/>
            <person name="Majoros W.H."/>
            <person name="May G.S."/>
            <person name="Miller B.L."/>
            <person name="Mohamoud Y."/>
            <person name="Molina M."/>
            <person name="Monod M."/>
            <person name="Mouyna I."/>
            <person name="Mulligan S."/>
            <person name="Murphy L.D."/>
            <person name="O'Neil S."/>
            <person name="Paulsen I."/>
            <person name="Penalva M.A."/>
            <person name="Pertea M."/>
            <person name="Price C."/>
            <person name="Pritchard B.L."/>
            <person name="Quail M.A."/>
            <person name="Rabbinowitsch E."/>
            <person name="Rawlins N."/>
            <person name="Rajandream M.A."/>
            <person name="Reichard U."/>
            <person name="Renauld H."/>
            <person name="Robson G.D."/>
            <person name="Rodriguez de Cordoba S."/>
            <person name="Rodriguez-Pena J.M."/>
            <person name="Ronning C.M."/>
            <person name="Rutter S."/>
            <person name="Salzberg S.L."/>
            <person name="Sanchez M."/>
            <person name="Sanchez-Ferrero J.C."/>
            <person name="Saunders D."/>
            <person name="Seeger K."/>
            <person name="Squares R."/>
            <person name="Squares S."/>
            <person name="Takeuchi M."/>
            <person name="Tekaia F."/>
            <person name="Turner G."/>
            <person name="Vazquez de Aldana C.R."/>
            <person name="Weidman J."/>
            <person name="White O."/>
            <person name="Woodward J.R."/>
            <person name="Yu J.-H."/>
            <person name="Fraser C.M."/>
            <person name="Galagan J.E."/>
            <person name="Asai K."/>
            <person name="Machida M."/>
            <person name="Hall N."/>
            <person name="Barrell B.G."/>
            <person name="Denning D.W."/>
        </authorList>
    </citation>
    <scope>NUCLEOTIDE SEQUENCE [LARGE SCALE GENOMIC DNA]</scope>
    <source>
        <strain>ATCC MYA-4609 / CBS 101355 / FGSC A1100 / Af293</strain>
    </source>
</reference>
<reference key="2">
    <citation type="journal article" date="2021" name="Enzyme Microb. Technol.">
        <title>Comparative analysis of two recombinant LPMOs from Aspergillus fumigatus and their effects on sugarcane bagasse saccharification.</title>
        <authorList>
            <person name="Velasco J."/>
            <person name="de Oliveira Arnoldi Pellegrini V."/>
            <person name="Sepulchro A.G.V."/>
            <person name="Kadowaki M.A.S."/>
            <person name="Santo M.C.E."/>
            <person name="Polikarpov I."/>
            <person name="Segato F."/>
        </authorList>
    </citation>
    <scope>FUNCTION</scope>
    <scope>CATALYTIC ACTIVITY</scope>
    <scope>BIOPHYSICOCHEMICAL PROPERTIES</scope>
    <scope>BIOTECHNOLOGY</scope>
</reference>
<protein>
    <recommendedName>
        <fullName evidence="8">AA9 family lytic polysaccharide monooxygenase A</fullName>
        <shortName evidence="8">AfAA9A</shortName>
        <ecNumber evidence="7">1.14.99.56</ecNumber>
    </recommendedName>
    <alternativeName>
        <fullName evidence="9">Cellulase AA9A</fullName>
    </alternativeName>
    <alternativeName>
        <fullName evidence="9">Endo-beta-1,4-glucanase AA9A</fullName>
        <shortName evidence="9">Endoglucanase AA9A</shortName>
    </alternativeName>
    <alternativeName>
        <fullName evidence="9">Glycosyl hydrolase 61 family protein AA9A</fullName>
    </alternativeName>
</protein>
<name>LP9A_ASPFU</name>
<proteinExistence type="evidence at protein level"/>
<keyword id="KW-0119">Carbohydrate metabolism</keyword>
<keyword id="KW-0136">Cellulose degradation</keyword>
<keyword id="KW-0186">Copper</keyword>
<keyword id="KW-1015">Disulfide bond</keyword>
<keyword id="KW-0325">Glycoprotein</keyword>
<keyword id="KW-0479">Metal-binding</keyword>
<keyword id="KW-0503">Monooxygenase</keyword>
<keyword id="KW-0560">Oxidoreductase</keyword>
<keyword id="KW-0624">Polysaccharide degradation</keyword>
<keyword id="KW-1185">Reference proteome</keyword>
<keyword id="KW-0964">Secreted</keyword>
<keyword id="KW-0732">Signal</keyword>
<accession>Q4X066</accession>
<comment type="function">
    <text evidence="3 7">Lytic polysaccharide monooxygenase (LPMO) that depolymerizes crystalline and amorphous polysaccharides via the oxidation of scissile alpha- or beta-(1-4)-glycosidic bonds, yielding exclusively C1 oxidation products (PubMed:33541573). Catalysis by LPMOs requires the reduction of the active-site copper from Cu(II) to Cu(I) by a reducing agent and H(2)O(2) or O(2) as a cosubstrate (By similarity).</text>
</comment>
<comment type="catalytic activity">
    <reaction evidence="7">
        <text>[(1-&gt;4)-beta-D-glucosyl]n+m + reduced acceptor + O2 = 4-dehydro-beta-D-glucosyl-[(1-&gt;4)-beta-D-glucosyl]n-1 + [(1-&gt;4)-beta-D-glucosyl]m + acceptor + H2O.</text>
        <dbReference type="EC" id="1.14.99.56"/>
    </reaction>
</comment>
<comment type="cofactor">
    <cofactor evidence="3">
        <name>Cu(2+)</name>
        <dbReference type="ChEBI" id="CHEBI:29036"/>
    </cofactor>
    <text evidence="3">Binds 1 copper ion per subunit.</text>
</comment>
<comment type="biophysicochemical properties">
    <phDependence>
        <text evidence="7">Optimum pH is 8.0.</text>
    </phDependence>
</comment>
<comment type="subcellular location">
    <subcellularLocation>
        <location evidence="10">Secreted</location>
    </subcellularLocation>
</comment>
<comment type="biotechnology">
    <text evidence="7">Lignocellulose is the most abundant polymeric composite on Earth and is a recalcitrant but promising renewable substrate for industrial biotechnology applications. Together with cellobiose dehydrogenases (CDHs) an enzymatic system capable of oxidative cellulose cleavage is formed, which increases the efficiency of cellulases and put LPMOs at focus of biofuel research.</text>
</comment>
<comment type="similarity">
    <text evidence="9">Belongs to the polysaccharide monooxygenase AA9 family.</text>
</comment>
<organism>
    <name type="scientific">Aspergillus fumigatus (strain ATCC MYA-4609 / CBS 101355 / FGSC A1100 / Af293)</name>
    <name type="common">Neosartorya fumigata</name>
    <dbReference type="NCBI Taxonomy" id="330879"/>
    <lineage>
        <taxon>Eukaryota</taxon>
        <taxon>Fungi</taxon>
        <taxon>Dikarya</taxon>
        <taxon>Ascomycota</taxon>
        <taxon>Pezizomycotina</taxon>
        <taxon>Eurotiomycetes</taxon>
        <taxon>Eurotiomycetidae</taxon>
        <taxon>Eurotiales</taxon>
        <taxon>Aspergillaceae</taxon>
        <taxon>Aspergillus</taxon>
        <taxon>Aspergillus subgen. Fumigati</taxon>
    </lineage>
</organism>
<feature type="signal peptide" evidence="4">
    <location>
        <begin position="1"/>
        <end position="17"/>
    </location>
</feature>
<feature type="chain" id="PRO_5004246455" description="AA9 family lytic polysaccharide monooxygenase A">
    <location>
        <begin position="18"/>
        <end position="290"/>
    </location>
</feature>
<feature type="region of interest" description="Disordered" evidence="6">
    <location>
        <begin position="240"/>
        <end position="290"/>
    </location>
</feature>
<feature type="compositionally biased region" description="Low complexity" evidence="6">
    <location>
        <begin position="245"/>
        <end position="275"/>
    </location>
</feature>
<feature type="compositionally biased region" description="Basic residues" evidence="6">
    <location>
        <begin position="280"/>
        <end position="290"/>
    </location>
</feature>
<feature type="binding site" evidence="3">
    <location>
        <position position="18"/>
    </location>
    <ligand>
        <name>Cu(2+)</name>
        <dbReference type="ChEBI" id="CHEBI:29036"/>
        <note>catalytic</note>
    </ligand>
</feature>
<feature type="binding site" evidence="3">
    <location>
        <position position="101"/>
    </location>
    <ligand>
        <name>Cu(2+)</name>
        <dbReference type="ChEBI" id="CHEBI:29036"/>
        <note>catalytic</note>
    </ligand>
</feature>
<feature type="binding site" evidence="2">
    <location>
        <position position="176"/>
    </location>
    <ligand>
        <name>O2</name>
        <dbReference type="ChEBI" id="CHEBI:15379"/>
    </ligand>
</feature>
<feature type="binding site" evidence="3">
    <location>
        <position position="187"/>
    </location>
    <ligand>
        <name>Cu(2+)</name>
        <dbReference type="ChEBI" id="CHEBI:29036"/>
        <note>catalytic</note>
    </ligand>
</feature>
<feature type="glycosylation site" description="N-linked (GlcNAc...) asparagine" evidence="5">
    <location>
        <position position="220"/>
    </location>
</feature>
<feature type="glycosylation site" description="N-linked (GlcNAc...) asparagine" evidence="5">
    <location>
        <position position="254"/>
    </location>
</feature>
<feature type="disulfide bond" evidence="1">
    <location>
        <begin position="67"/>
        <end position="189"/>
    </location>
</feature>